<proteinExistence type="inferred from homology"/>
<comment type="function">
    <text evidence="1">Catalyzes the NADPH-dependent reduction of glutamyl-tRNA(Glu) to glutamate 1-semialdehyde (GSA).</text>
</comment>
<comment type="catalytic activity">
    <reaction evidence="1">
        <text>(S)-4-amino-5-oxopentanoate + tRNA(Glu) + NADP(+) = L-glutamyl-tRNA(Glu) + NADPH + H(+)</text>
        <dbReference type="Rhea" id="RHEA:12344"/>
        <dbReference type="Rhea" id="RHEA-COMP:9663"/>
        <dbReference type="Rhea" id="RHEA-COMP:9680"/>
        <dbReference type="ChEBI" id="CHEBI:15378"/>
        <dbReference type="ChEBI" id="CHEBI:57501"/>
        <dbReference type="ChEBI" id="CHEBI:57783"/>
        <dbReference type="ChEBI" id="CHEBI:58349"/>
        <dbReference type="ChEBI" id="CHEBI:78442"/>
        <dbReference type="ChEBI" id="CHEBI:78520"/>
        <dbReference type="EC" id="1.2.1.70"/>
    </reaction>
</comment>
<comment type="pathway">
    <text evidence="1">Porphyrin-containing compound metabolism; protoporphyrin-IX biosynthesis; 5-aminolevulinate from L-glutamyl-tRNA(Glu): step 1/2.</text>
</comment>
<comment type="subunit">
    <text evidence="1">Homodimer.</text>
</comment>
<comment type="domain">
    <text evidence="1">Possesses an unusual extended V-shaped dimeric structure with each monomer consisting of three distinct domains arranged along a curved 'spinal' alpha-helix. The N-terminal catalytic domain specifically recognizes the glutamate moiety of the substrate. The second domain is the NADPH-binding domain, and the third C-terminal domain is responsible for dimerization.</text>
</comment>
<comment type="miscellaneous">
    <text evidence="1">During catalysis, the active site Cys acts as a nucleophile attacking the alpha-carbonyl group of tRNA-bound glutamate with the formation of a thioester intermediate between enzyme and glutamate, and the concomitant release of tRNA(Glu). The thioester intermediate is finally reduced by direct hydride transfer from NADPH, to form the product GSA.</text>
</comment>
<comment type="similarity">
    <text evidence="1">Belongs to the glutamyl-tRNA reductase family.</text>
</comment>
<organism>
    <name type="scientific">Xylella fastidiosa (strain M12)</name>
    <dbReference type="NCBI Taxonomy" id="405440"/>
    <lineage>
        <taxon>Bacteria</taxon>
        <taxon>Pseudomonadati</taxon>
        <taxon>Pseudomonadota</taxon>
        <taxon>Gammaproteobacteria</taxon>
        <taxon>Lysobacterales</taxon>
        <taxon>Lysobacteraceae</taxon>
        <taxon>Xylella</taxon>
    </lineage>
</organism>
<gene>
    <name evidence="1" type="primary">hemA</name>
    <name type="ordered locus">Xfasm12_2211</name>
</gene>
<keyword id="KW-0521">NADP</keyword>
<keyword id="KW-0560">Oxidoreductase</keyword>
<keyword id="KW-0627">Porphyrin biosynthesis</keyword>
<protein>
    <recommendedName>
        <fullName evidence="1">Glutamyl-tRNA reductase</fullName>
        <shortName evidence="1">GluTR</shortName>
        <ecNumber evidence="1">1.2.1.70</ecNumber>
    </recommendedName>
</protein>
<feature type="chain" id="PRO_1000093180" description="Glutamyl-tRNA reductase">
    <location>
        <begin position="1"/>
        <end position="432"/>
    </location>
</feature>
<feature type="active site" description="Nucleophile" evidence="1">
    <location>
        <position position="50"/>
    </location>
</feature>
<feature type="binding site" evidence="1">
    <location>
        <begin position="49"/>
        <end position="52"/>
    </location>
    <ligand>
        <name>substrate</name>
    </ligand>
</feature>
<feature type="binding site" evidence="1">
    <location>
        <position position="101"/>
    </location>
    <ligand>
        <name>substrate</name>
    </ligand>
</feature>
<feature type="binding site" evidence="1">
    <location>
        <begin position="106"/>
        <end position="108"/>
    </location>
    <ligand>
        <name>substrate</name>
    </ligand>
</feature>
<feature type="binding site" evidence="1">
    <location>
        <position position="112"/>
    </location>
    <ligand>
        <name>substrate</name>
    </ligand>
</feature>
<feature type="binding site" evidence="1">
    <location>
        <begin position="181"/>
        <end position="186"/>
    </location>
    <ligand>
        <name>NADP(+)</name>
        <dbReference type="ChEBI" id="CHEBI:58349"/>
    </ligand>
</feature>
<feature type="site" description="Important for activity" evidence="1">
    <location>
        <position position="91"/>
    </location>
</feature>
<sequence length="432" mass="47873">MTLWVLGLNHQTAPMELRERASFVGDALPRALDSLRNLPNVNEAALLSTCNRTELYAETTNAQMLLNWLEQHRPGLQNHLYQYSDAAAVRHLFRVATGLDSMVLGESQILGQVKDSWSMARTHGTLGNTLDRLFQHSFSVAKHARTNTRIGTNPVSIASTAVRLAQDAFSPLNESTVLLIGTGETIQLAAKHLSEGRVQRLLIANRTHAKAQMLASQHGGYALPLTELNLHLAEADIIFSATAAPTPIVTQSNVESALHIRKRKPMLLFDLAIPRDIETEVGTLTDAYLYTIDDLERAVEENRRSRREAAETAEAIIELQVKRYMDTLQAHAHQAPLRRLRTFGTTTRDELLTRARQQLANGRPAGEVLEQLAHGLTNRLLHPPTAALREAALANNTELVRAAEQLFPEKPGYHHPTLQTTIVKTDETDPAS</sequence>
<accession>B0U5Z2</accession>
<reference key="1">
    <citation type="journal article" date="2010" name="J. Bacteriol.">
        <title>Whole genome sequences of two Xylella fastidiosa strains (M12 and M23) causing almond leaf scorch disease in California.</title>
        <authorList>
            <person name="Chen J."/>
            <person name="Xie G."/>
            <person name="Han S."/>
            <person name="Chertkov O."/>
            <person name="Sims D."/>
            <person name="Civerolo E.L."/>
        </authorList>
    </citation>
    <scope>NUCLEOTIDE SEQUENCE [LARGE SCALE GENOMIC DNA]</scope>
    <source>
        <strain>M12</strain>
    </source>
</reference>
<evidence type="ECO:0000255" key="1">
    <source>
        <dbReference type="HAMAP-Rule" id="MF_00087"/>
    </source>
</evidence>
<dbReference type="EC" id="1.2.1.70" evidence="1"/>
<dbReference type="EMBL" id="CP000941">
    <property type="protein sequence ID" value="ACA13064.1"/>
    <property type="molecule type" value="Genomic_DNA"/>
</dbReference>
<dbReference type="RefSeq" id="WP_004084719.1">
    <property type="nucleotide sequence ID" value="NC_010513.1"/>
</dbReference>
<dbReference type="SMR" id="B0U5Z2"/>
<dbReference type="KEGG" id="xfm:Xfasm12_2211"/>
<dbReference type="HOGENOM" id="CLU_035113_2_2_6"/>
<dbReference type="UniPathway" id="UPA00251">
    <property type="reaction ID" value="UER00316"/>
</dbReference>
<dbReference type="GO" id="GO:0008883">
    <property type="term" value="F:glutamyl-tRNA reductase activity"/>
    <property type="evidence" value="ECO:0007669"/>
    <property type="project" value="UniProtKB-UniRule"/>
</dbReference>
<dbReference type="GO" id="GO:0050661">
    <property type="term" value="F:NADP binding"/>
    <property type="evidence" value="ECO:0007669"/>
    <property type="project" value="InterPro"/>
</dbReference>
<dbReference type="GO" id="GO:0019353">
    <property type="term" value="P:protoporphyrinogen IX biosynthetic process from glutamate"/>
    <property type="evidence" value="ECO:0007669"/>
    <property type="project" value="TreeGrafter"/>
</dbReference>
<dbReference type="CDD" id="cd05213">
    <property type="entry name" value="NAD_bind_Glutamyl_tRNA_reduct"/>
    <property type="match status" value="1"/>
</dbReference>
<dbReference type="FunFam" id="3.30.460.30:FF:000001">
    <property type="entry name" value="Glutamyl-tRNA reductase"/>
    <property type="match status" value="1"/>
</dbReference>
<dbReference type="FunFam" id="3.40.50.720:FF:000031">
    <property type="entry name" value="Glutamyl-tRNA reductase"/>
    <property type="match status" value="1"/>
</dbReference>
<dbReference type="Gene3D" id="3.30.460.30">
    <property type="entry name" value="Glutamyl-tRNA reductase, N-terminal domain"/>
    <property type="match status" value="1"/>
</dbReference>
<dbReference type="Gene3D" id="3.40.50.720">
    <property type="entry name" value="NAD(P)-binding Rossmann-like Domain"/>
    <property type="match status" value="1"/>
</dbReference>
<dbReference type="HAMAP" id="MF_00087">
    <property type="entry name" value="Glu_tRNA_reductase"/>
    <property type="match status" value="1"/>
</dbReference>
<dbReference type="InterPro" id="IPR000343">
    <property type="entry name" value="4pyrrol_synth_GluRdtase"/>
</dbReference>
<dbReference type="InterPro" id="IPR015896">
    <property type="entry name" value="4pyrrol_synth_GluRdtase_dimer"/>
</dbReference>
<dbReference type="InterPro" id="IPR015895">
    <property type="entry name" value="4pyrrol_synth_GluRdtase_N"/>
</dbReference>
<dbReference type="InterPro" id="IPR018214">
    <property type="entry name" value="GluRdtase_CS"/>
</dbReference>
<dbReference type="InterPro" id="IPR036453">
    <property type="entry name" value="GluRdtase_dimer_dom_sf"/>
</dbReference>
<dbReference type="InterPro" id="IPR036343">
    <property type="entry name" value="GluRdtase_N_sf"/>
</dbReference>
<dbReference type="InterPro" id="IPR036291">
    <property type="entry name" value="NAD(P)-bd_dom_sf"/>
</dbReference>
<dbReference type="InterPro" id="IPR006151">
    <property type="entry name" value="Shikm_DH/Glu-tRNA_Rdtase"/>
</dbReference>
<dbReference type="NCBIfam" id="TIGR01035">
    <property type="entry name" value="hemA"/>
    <property type="match status" value="1"/>
</dbReference>
<dbReference type="PANTHER" id="PTHR43013">
    <property type="entry name" value="GLUTAMYL-TRNA REDUCTASE"/>
    <property type="match status" value="1"/>
</dbReference>
<dbReference type="PANTHER" id="PTHR43013:SF1">
    <property type="entry name" value="GLUTAMYL-TRNA REDUCTASE"/>
    <property type="match status" value="1"/>
</dbReference>
<dbReference type="Pfam" id="PF00745">
    <property type="entry name" value="GlutR_dimer"/>
    <property type="match status" value="1"/>
</dbReference>
<dbReference type="Pfam" id="PF05201">
    <property type="entry name" value="GlutR_N"/>
    <property type="match status" value="1"/>
</dbReference>
<dbReference type="Pfam" id="PF01488">
    <property type="entry name" value="Shikimate_DH"/>
    <property type="match status" value="1"/>
</dbReference>
<dbReference type="PIRSF" id="PIRSF000445">
    <property type="entry name" value="4pyrrol_synth_GluRdtase"/>
    <property type="match status" value="1"/>
</dbReference>
<dbReference type="SUPFAM" id="SSF69742">
    <property type="entry name" value="Glutamyl tRNA-reductase catalytic, N-terminal domain"/>
    <property type="match status" value="1"/>
</dbReference>
<dbReference type="SUPFAM" id="SSF69075">
    <property type="entry name" value="Glutamyl tRNA-reductase dimerization domain"/>
    <property type="match status" value="1"/>
</dbReference>
<dbReference type="SUPFAM" id="SSF51735">
    <property type="entry name" value="NAD(P)-binding Rossmann-fold domains"/>
    <property type="match status" value="1"/>
</dbReference>
<dbReference type="PROSITE" id="PS00747">
    <property type="entry name" value="GLUTR"/>
    <property type="match status" value="1"/>
</dbReference>
<name>HEM1_XYLFM</name>